<protein>
    <recommendedName>
        <fullName>Solute carrier family 22 member 6-B</fullName>
    </recommendedName>
    <alternativeName>
        <fullName>Organic cation transporter 1-B</fullName>
    </alternativeName>
    <alternativeName>
        <fullName>Renal organic anion transporter 1-B</fullName>
        <shortName>ROAT1-B</shortName>
    </alternativeName>
</protein>
<comment type="function">
    <text evidence="1">Involved in the renal elimination of endogenous and exogenous organic anions. Mediates the sodium-independent uptake of p-aminohippurate (PAH), cidofovir, adefovir, 9-(2-phosphonylmethoxyethyl) guanine (PMEG), 9-(2-phosphonylmethoxyethyl) diaminopurine (PMEDAP) and edaravone sulfate. PAH uptake is inhibited by furosemide, steviol, phorbol 12-myristate 13-acetate (PMA), calcium ionophore A23187, benzylpenicillin, furosemide, indomethacin, bumetamide, losartan, probenecid, phenol red, urate, and alpha-ketoglutarate (By similarity).</text>
</comment>
<comment type="subcellular location">
    <subcellularLocation>
        <location evidence="3">Cell membrane</location>
        <topology evidence="3">Multi-pass membrane protein</topology>
    </subcellularLocation>
    <subcellularLocation>
        <location evidence="2">Basolateral cell membrane</location>
        <topology evidence="5">Multi-pass membrane protein</topology>
    </subcellularLocation>
    <subcellularLocation>
        <location evidence="2">Basal cell membrane</location>
        <topology evidence="5">Multi-pass membrane protein</topology>
    </subcellularLocation>
</comment>
<comment type="PTM">
    <text evidence="1">Glycosylated. Glycosylation is necessary for proper targeting of the transporter to the plasma membrane (By similarity).</text>
</comment>
<comment type="similarity">
    <text evidence="5">Belongs to the major facilitator (TC 2.A.1) superfamily. Organic cation transporter (TC 2.A.1.19) family.</text>
</comment>
<name>S226B_XENLA</name>
<reference key="1">
    <citation type="submission" date="2004-08" db="EMBL/GenBank/DDBJ databases">
        <authorList>
            <consortium name="NIH - Xenopus Gene Collection (XGC) project"/>
        </authorList>
    </citation>
    <scope>NUCLEOTIDE SEQUENCE [LARGE SCALE MRNA]</scope>
    <source>
        <tissue>Kidney</tissue>
    </source>
</reference>
<sequence>MAFQEILESLGGMGRYQVIHVVLLSLPVFMLASHNLMQNFTAATPSHHCRINGTYEETNFTGPWLRALLPMTPTGEFSKCLRYTTPQYELLENNLTQSYDDLETEPCLDGWVYDHSEFASTIITQWDLVCNHRRMRQVAQSIYMAGVLVGSILFGGLSDKFGRRPLNIWSNLQMFVTGICAAFSPNYIWYCIFRFLTGVAFSGIVLNSYSLTVEWIPTGNRAFTSTATGYCYTMGQLVLVGLAFIIRDWQWLQLAASIPFFFYFLYSWWIPESGRWLVLSGKPEVACKALKKVAQINGKKEAGEKLTVEILKSSMQREINASHNSTYSALDLVRTPVVRRISFCISCTWFSTSFAYYGLALDLQSFGVSIYIIQIIFGTVDIPAKFISYFITTYVGRRVSQAITLILAGIAILVNISVPQDFQTVRTAMAVFGKGCLAASFNCLYLYTGELYPTVIRQTGMGLGAMMARLGGIIAPLAQMTGDIYHSLPLIIFGCLPILSGIAGCFLPETLGVPLPETIEEVESPDKQQKDVNVSAKIPLKETELYNMKTDV</sequence>
<proteinExistence type="evidence at transcript level"/>
<organism>
    <name type="scientific">Xenopus laevis</name>
    <name type="common">African clawed frog</name>
    <dbReference type="NCBI Taxonomy" id="8355"/>
    <lineage>
        <taxon>Eukaryota</taxon>
        <taxon>Metazoa</taxon>
        <taxon>Chordata</taxon>
        <taxon>Craniata</taxon>
        <taxon>Vertebrata</taxon>
        <taxon>Euteleostomi</taxon>
        <taxon>Amphibia</taxon>
        <taxon>Batrachia</taxon>
        <taxon>Anura</taxon>
        <taxon>Pipoidea</taxon>
        <taxon>Pipidae</taxon>
        <taxon>Xenopodinae</taxon>
        <taxon>Xenopus</taxon>
        <taxon>Xenopus</taxon>
    </lineage>
</organism>
<evidence type="ECO:0000250" key="1"/>
<evidence type="ECO:0000250" key="2">
    <source>
        <dbReference type="UniProtKB" id="Q4U2R8"/>
    </source>
</evidence>
<evidence type="ECO:0000250" key="3">
    <source>
        <dbReference type="UniProtKB" id="Q8VC69"/>
    </source>
</evidence>
<evidence type="ECO:0000255" key="4"/>
<evidence type="ECO:0000305" key="5"/>
<feature type="chain" id="PRO_0000324176" description="Solute carrier family 22 member 6-B">
    <location>
        <begin position="1"/>
        <end position="552"/>
    </location>
</feature>
<feature type="topological domain" description="Cytoplasmic" evidence="4">
    <location>
        <begin position="1"/>
        <end position="16"/>
    </location>
</feature>
<feature type="transmembrane region" description="Helical" evidence="4">
    <location>
        <begin position="17"/>
        <end position="37"/>
    </location>
</feature>
<feature type="topological domain" description="Extracellular" evidence="4">
    <location>
        <begin position="38"/>
        <end position="137"/>
    </location>
</feature>
<feature type="transmembrane region" description="Helical" evidence="4">
    <location>
        <begin position="138"/>
        <end position="158"/>
    </location>
</feature>
<feature type="topological domain" description="Cytoplasmic" evidence="4">
    <location>
        <begin position="159"/>
        <end position="164"/>
    </location>
</feature>
<feature type="transmembrane region" description="Helical" evidence="4">
    <location>
        <begin position="165"/>
        <end position="184"/>
    </location>
</feature>
<feature type="topological domain" description="Extracellular" evidence="4">
    <location>
        <position position="185"/>
    </location>
</feature>
<feature type="transmembrane region" description="Helical" evidence="4">
    <location>
        <begin position="186"/>
        <end position="206"/>
    </location>
</feature>
<feature type="topological domain" description="Cytoplasmic" evidence="4">
    <location>
        <begin position="207"/>
        <end position="225"/>
    </location>
</feature>
<feature type="transmembrane region" description="Helical" evidence="4">
    <location>
        <begin position="226"/>
        <end position="246"/>
    </location>
</feature>
<feature type="topological domain" description="Extracellular" evidence="4">
    <location>
        <begin position="247"/>
        <end position="250"/>
    </location>
</feature>
<feature type="transmembrane region" description="Helical" evidence="4">
    <location>
        <begin position="251"/>
        <end position="271"/>
    </location>
</feature>
<feature type="topological domain" description="Cytoplasmic" evidence="4">
    <location>
        <begin position="272"/>
        <end position="336"/>
    </location>
</feature>
<feature type="transmembrane region" description="Helical" evidence="4">
    <location>
        <begin position="337"/>
        <end position="356"/>
    </location>
</feature>
<feature type="topological domain" description="Extracellular" evidence="4">
    <location>
        <position position="357"/>
    </location>
</feature>
<feature type="transmembrane region" description="Helical" evidence="4">
    <location>
        <begin position="358"/>
        <end position="378"/>
    </location>
</feature>
<feature type="topological domain" description="Cytoplasmic" evidence="4">
    <location>
        <begin position="379"/>
        <end position="398"/>
    </location>
</feature>
<feature type="transmembrane region" description="Helical" evidence="4">
    <location>
        <begin position="399"/>
        <end position="419"/>
    </location>
</feature>
<feature type="topological domain" description="Extracellular" evidence="4">
    <location>
        <begin position="420"/>
        <end position="426"/>
    </location>
</feature>
<feature type="transmembrane region" description="Helical" evidence="4">
    <location>
        <begin position="427"/>
        <end position="447"/>
    </location>
</feature>
<feature type="topological domain" description="Cytoplasmic" evidence="4">
    <location>
        <begin position="448"/>
        <end position="459"/>
    </location>
</feature>
<feature type="transmembrane region" description="Helical" evidence="4">
    <location>
        <begin position="460"/>
        <end position="480"/>
    </location>
</feature>
<feature type="topological domain" description="Extracellular" evidence="4">
    <location>
        <begin position="481"/>
        <end position="487"/>
    </location>
</feature>
<feature type="transmembrane region" description="Helical" evidence="4">
    <location>
        <begin position="488"/>
        <end position="508"/>
    </location>
</feature>
<feature type="topological domain" description="Cytoplasmic" evidence="4">
    <location>
        <begin position="509"/>
        <end position="552"/>
    </location>
</feature>
<dbReference type="EMBL" id="BC081057">
    <property type="protein sequence ID" value="AAH81057.1"/>
    <property type="molecule type" value="mRNA"/>
</dbReference>
<dbReference type="RefSeq" id="NP_001087663.1">
    <property type="nucleotide sequence ID" value="NM_001094194.1"/>
</dbReference>
<dbReference type="SMR" id="Q66J52"/>
<dbReference type="DNASU" id="447487"/>
<dbReference type="GeneID" id="447487"/>
<dbReference type="KEGG" id="xla:447487"/>
<dbReference type="AGR" id="Xenbase:XB-GENE-5842265"/>
<dbReference type="CTD" id="447487"/>
<dbReference type="Xenbase" id="XB-GENE-5842265">
    <property type="gene designation" value="slc22a6.S"/>
</dbReference>
<dbReference type="OrthoDB" id="2544694at2759"/>
<dbReference type="Proteomes" id="UP000186698">
    <property type="component" value="Chromosome 4S"/>
</dbReference>
<dbReference type="Bgee" id="447487">
    <property type="expression patterns" value="Expressed in kidney"/>
</dbReference>
<dbReference type="GO" id="GO:0009925">
    <property type="term" value="C:basal plasma membrane"/>
    <property type="evidence" value="ECO:0000250"/>
    <property type="project" value="UniProtKB"/>
</dbReference>
<dbReference type="GO" id="GO:0016323">
    <property type="term" value="C:basolateral plasma membrane"/>
    <property type="evidence" value="ECO:0007669"/>
    <property type="project" value="UniProtKB-SubCell"/>
</dbReference>
<dbReference type="GO" id="GO:0022857">
    <property type="term" value="F:transmembrane transporter activity"/>
    <property type="evidence" value="ECO:0007669"/>
    <property type="project" value="InterPro"/>
</dbReference>
<dbReference type="CDD" id="cd17446">
    <property type="entry name" value="MFS_SLC22A6_OAT1_like"/>
    <property type="match status" value="1"/>
</dbReference>
<dbReference type="FunFam" id="1.20.1250.20:FF:000023">
    <property type="entry name" value="Solute carrier family 22 member 6"/>
    <property type="match status" value="1"/>
</dbReference>
<dbReference type="Gene3D" id="1.20.1250.20">
    <property type="entry name" value="MFS general substrate transporter like domains"/>
    <property type="match status" value="1"/>
</dbReference>
<dbReference type="InterPro" id="IPR020846">
    <property type="entry name" value="MFS_dom"/>
</dbReference>
<dbReference type="InterPro" id="IPR005828">
    <property type="entry name" value="MFS_sugar_transport-like"/>
</dbReference>
<dbReference type="InterPro" id="IPR036259">
    <property type="entry name" value="MFS_trans_sf"/>
</dbReference>
<dbReference type="InterPro" id="IPR004749">
    <property type="entry name" value="Orgcat_transp/SVOP"/>
</dbReference>
<dbReference type="NCBIfam" id="TIGR00898">
    <property type="entry name" value="2A0119"/>
    <property type="match status" value="1"/>
</dbReference>
<dbReference type="PANTHER" id="PTHR24064">
    <property type="entry name" value="SOLUTE CARRIER FAMILY 22 MEMBER"/>
    <property type="match status" value="1"/>
</dbReference>
<dbReference type="Pfam" id="PF00083">
    <property type="entry name" value="Sugar_tr"/>
    <property type="match status" value="1"/>
</dbReference>
<dbReference type="SUPFAM" id="SSF103473">
    <property type="entry name" value="MFS general substrate transporter"/>
    <property type="match status" value="1"/>
</dbReference>
<dbReference type="PROSITE" id="PS50850">
    <property type="entry name" value="MFS"/>
    <property type="match status" value="1"/>
</dbReference>
<keyword id="KW-1003">Cell membrane</keyword>
<keyword id="KW-0472">Membrane</keyword>
<keyword id="KW-1185">Reference proteome</keyword>
<keyword id="KW-0812">Transmembrane</keyword>
<keyword id="KW-1133">Transmembrane helix</keyword>
<gene>
    <name type="primary">slc22a6-b</name>
    <name type="synonym">oat1-b</name>
</gene>
<accession>Q66J52</accession>